<reference key="1">
    <citation type="journal article" date="2007" name="Science">
        <title>The Calyptogena magnifica chemoautotrophic symbiont genome.</title>
        <authorList>
            <person name="Newton I.L.G."/>
            <person name="Woyke T."/>
            <person name="Auchtung T.A."/>
            <person name="Dilly G.F."/>
            <person name="Dutton R.J."/>
            <person name="Fisher M.C."/>
            <person name="Fontanez K.M."/>
            <person name="Lau E."/>
            <person name="Stewart F.J."/>
            <person name="Richardson P.M."/>
            <person name="Barry K.W."/>
            <person name="Saunders E."/>
            <person name="Detter J.C."/>
            <person name="Wu D."/>
            <person name="Eisen J.A."/>
            <person name="Cavanaugh C.M."/>
        </authorList>
    </citation>
    <scope>NUCLEOTIDE SEQUENCE [LARGE SCALE GENOMIC DNA]</scope>
</reference>
<feature type="signal peptide" evidence="1">
    <location>
        <begin position="1"/>
        <end position="16"/>
    </location>
</feature>
<feature type="chain" id="PRO_5000182312" description="Tol-Pal system protein TolB" evidence="1">
    <location>
        <begin position="17"/>
        <end position="424"/>
    </location>
</feature>
<name>TOLB_RUTMC</name>
<gene>
    <name evidence="1" type="primary">tolB</name>
    <name type="ordered locus">Rmag_0515</name>
</gene>
<accession>A1AWG2</accession>
<dbReference type="EMBL" id="CP000488">
    <property type="protein sequence ID" value="ABL02269.1"/>
    <property type="molecule type" value="Genomic_DNA"/>
</dbReference>
<dbReference type="RefSeq" id="WP_011737894.1">
    <property type="nucleotide sequence ID" value="NC_008610.1"/>
</dbReference>
<dbReference type="SMR" id="A1AWG2"/>
<dbReference type="STRING" id="413404.Rmag_0515"/>
<dbReference type="KEGG" id="rma:Rmag_0515"/>
<dbReference type="eggNOG" id="COG0823">
    <property type="taxonomic scope" value="Bacteria"/>
</dbReference>
<dbReference type="HOGENOM" id="CLU_047123_0_0_6"/>
<dbReference type="OrthoDB" id="9802240at2"/>
<dbReference type="Proteomes" id="UP000002587">
    <property type="component" value="Chromosome"/>
</dbReference>
<dbReference type="GO" id="GO:0042597">
    <property type="term" value="C:periplasmic space"/>
    <property type="evidence" value="ECO:0007669"/>
    <property type="project" value="UniProtKB-SubCell"/>
</dbReference>
<dbReference type="GO" id="GO:0051301">
    <property type="term" value="P:cell division"/>
    <property type="evidence" value="ECO:0007669"/>
    <property type="project" value="UniProtKB-UniRule"/>
</dbReference>
<dbReference type="GO" id="GO:0017038">
    <property type="term" value="P:protein import"/>
    <property type="evidence" value="ECO:0007669"/>
    <property type="project" value="InterPro"/>
</dbReference>
<dbReference type="Gene3D" id="2.120.10.30">
    <property type="entry name" value="TolB, C-terminal domain"/>
    <property type="match status" value="1"/>
</dbReference>
<dbReference type="Gene3D" id="3.40.50.10070">
    <property type="entry name" value="TolB, N-terminal domain"/>
    <property type="match status" value="1"/>
</dbReference>
<dbReference type="HAMAP" id="MF_00671">
    <property type="entry name" value="TolB"/>
    <property type="match status" value="1"/>
</dbReference>
<dbReference type="InterPro" id="IPR011042">
    <property type="entry name" value="6-blade_b-propeller_TolB-like"/>
</dbReference>
<dbReference type="InterPro" id="IPR011659">
    <property type="entry name" value="PD40"/>
</dbReference>
<dbReference type="InterPro" id="IPR014167">
    <property type="entry name" value="Tol-Pal_TolB"/>
</dbReference>
<dbReference type="InterPro" id="IPR007195">
    <property type="entry name" value="TolB_N"/>
</dbReference>
<dbReference type="NCBIfam" id="TIGR02800">
    <property type="entry name" value="propeller_TolB"/>
    <property type="match status" value="1"/>
</dbReference>
<dbReference type="PANTHER" id="PTHR36842:SF1">
    <property type="entry name" value="PROTEIN TOLB"/>
    <property type="match status" value="1"/>
</dbReference>
<dbReference type="PANTHER" id="PTHR36842">
    <property type="entry name" value="PROTEIN TOLB HOMOLOG"/>
    <property type="match status" value="1"/>
</dbReference>
<dbReference type="Pfam" id="PF07676">
    <property type="entry name" value="PD40"/>
    <property type="match status" value="4"/>
</dbReference>
<dbReference type="Pfam" id="PF04052">
    <property type="entry name" value="TolB_N"/>
    <property type="match status" value="1"/>
</dbReference>
<dbReference type="SUPFAM" id="SSF52964">
    <property type="entry name" value="TolB, N-terminal domain"/>
    <property type="match status" value="1"/>
</dbReference>
<dbReference type="SUPFAM" id="SSF69304">
    <property type="entry name" value="Tricorn protease N-terminal domain"/>
    <property type="match status" value="1"/>
</dbReference>
<proteinExistence type="inferred from homology"/>
<sequence length="424" mass="47967">MKQLLVLILSLYTTLAWTVLEVTILKQDENAFPIVISDFSVIGDANQGKIIAHVIRNNFNRSGEFSASSVNYVINNKPNFDKWKAKKIEAIVLGKLEKISKKVFNVEIELLDVFSKKILYKDKFVVHNRGIRRIAHYLSDQIYHVLLGEKGSFDTRLAYISVTNKGKGEREYRLEISDSDAQNPQTILKSKKPILSPVWSPDQNKIAYVSFKNARSEVFIQYPFVRRKTQKLPYFDGIASAPSWHPNGKNLLLTLSKNGNKDIYSYQLSSKKLTRLTTDVGIDTEASYSSEGDKIVFTSNRSGQVQVYIKDLKTNKINRATFKGRYNAKAVFSPDDKSLAMVHRVGKDYRIALLDIATKNLTIMTNNQLDESPFFSPNGSMIIFATNKGSSSVLSVVSILGRQTFELASKAGEVREPNWSHYLK</sequence>
<evidence type="ECO:0000255" key="1">
    <source>
        <dbReference type="HAMAP-Rule" id="MF_00671"/>
    </source>
</evidence>
<protein>
    <recommendedName>
        <fullName evidence="1">Tol-Pal system protein TolB</fullName>
    </recommendedName>
</protein>
<organism>
    <name type="scientific">Ruthia magnifica subsp. Calyptogena magnifica</name>
    <dbReference type="NCBI Taxonomy" id="413404"/>
    <lineage>
        <taxon>Bacteria</taxon>
        <taxon>Pseudomonadati</taxon>
        <taxon>Pseudomonadota</taxon>
        <taxon>Gammaproteobacteria</taxon>
        <taxon>Candidatus Pseudothioglobaceae</taxon>
        <taxon>Candidatus Ruthturnera</taxon>
    </lineage>
</organism>
<comment type="function">
    <text evidence="1">Part of the Tol-Pal system, which plays a role in outer membrane invagination during cell division and is important for maintaining outer membrane integrity.</text>
</comment>
<comment type="subunit">
    <text evidence="1">The Tol-Pal system is composed of five core proteins: the inner membrane proteins TolA, TolQ and TolR, the periplasmic protein TolB and the outer membrane protein Pal. They form a network linking the inner and outer membranes and the peptidoglycan layer.</text>
</comment>
<comment type="subcellular location">
    <subcellularLocation>
        <location evidence="1">Periplasm</location>
    </subcellularLocation>
</comment>
<comment type="similarity">
    <text evidence="1">Belongs to the TolB family.</text>
</comment>
<keyword id="KW-0131">Cell cycle</keyword>
<keyword id="KW-0132">Cell division</keyword>
<keyword id="KW-0574">Periplasm</keyword>
<keyword id="KW-0732">Signal</keyword>